<gene>
    <name type="ordered locus">BLi00854</name>
    <name type="ordered locus">BL03049</name>
</gene>
<comment type="subcellular location">
    <subcellularLocation>
        <location evidence="1">Cell membrane</location>
        <topology evidence="1">Multi-pass membrane protein</topology>
    </subcellularLocation>
</comment>
<comment type="similarity">
    <text evidence="1">Belongs to the UPF0060 family.</text>
</comment>
<accession>Q65MC6</accession>
<accession>Q62XR9</accession>
<keyword id="KW-1003">Cell membrane</keyword>
<keyword id="KW-0472">Membrane</keyword>
<keyword id="KW-1185">Reference proteome</keyword>
<keyword id="KW-0812">Transmembrane</keyword>
<keyword id="KW-1133">Transmembrane helix</keyword>
<feature type="chain" id="PRO_0000162325" description="UPF0060 membrane protein BLi00854/BL03049">
    <location>
        <begin position="1"/>
        <end position="108"/>
    </location>
</feature>
<feature type="transmembrane region" description="Helical" evidence="1">
    <location>
        <begin position="3"/>
        <end position="23"/>
    </location>
</feature>
<feature type="transmembrane region" description="Helical" evidence="1">
    <location>
        <begin position="31"/>
        <end position="51"/>
    </location>
</feature>
<feature type="transmembrane region" description="Helical" evidence="1">
    <location>
        <begin position="60"/>
        <end position="80"/>
    </location>
</feature>
<feature type="transmembrane region" description="Helical" evidence="1">
    <location>
        <begin position="86"/>
        <end position="106"/>
    </location>
</feature>
<protein>
    <recommendedName>
        <fullName evidence="1">UPF0060 membrane protein BLi00854/BL03049</fullName>
    </recommendedName>
</protein>
<evidence type="ECO:0000255" key="1">
    <source>
        <dbReference type="HAMAP-Rule" id="MF_00010"/>
    </source>
</evidence>
<organism>
    <name type="scientific">Bacillus licheniformis (strain ATCC 14580 / DSM 13 / JCM 2505 / CCUG 7422 / NBRC 12200 / NCIMB 9375 / NCTC 10341 / NRRL NRS-1264 / Gibson 46)</name>
    <dbReference type="NCBI Taxonomy" id="279010"/>
    <lineage>
        <taxon>Bacteria</taxon>
        <taxon>Bacillati</taxon>
        <taxon>Bacillota</taxon>
        <taxon>Bacilli</taxon>
        <taxon>Bacillales</taxon>
        <taxon>Bacillaceae</taxon>
        <taxon>Bacillus</taxon>
    </lineage>
</organism>
<proteinExistence type="inferred from homology"/>
<sequence>MMIAIGLFLLAGLAEIAGGYLVWLWLRESKPLWYGLAGGLTLIIYGVIPAFQAFPSFGRVYAAYGGVFIILAVLWGWLVDKKTPDLYDWAGAVICLAGVSVMLWAPRG</sequence>
<reference key="1">
    <citation type="journal article" date="2004" name="J. Mol. Microbiol. Biotechnol.">
        <title>The complete genome sequence of Bacillus licheniformis DSM13, an organism with great industrial potential.</title>
        <authorList>
            <person name="Veith B."/>
            <person name="Herzberg C."/>
            <person name="Steckel S."/>
            <person name="Feesche J."/>
            <person name="Maurer K.H."/>
            <person name="Ehrenreich P."/>
            <person name="Baeumer S."/>
            <person name="Henne A."/>
            <person name="Liesegang H."/>
            <person name="Merkl R."/>
            <person name="Ehrenreich A."/>
            <person name="Gottschalk G."/>
        </authorList>
    </citation>
    <scope>NUCLEOTIDE SEQUENCE [LARGE SCALE GENOMIC DNA]</scope>
    <source>
        <strain>ATCC 14580 / DSM 13 / JCM 2505 / CCUG 7422 / NBRC 12200 / NCIMB 9375 / NCTC 10341 / NRRL NRS-1264 / Gibson 46</strain>
    </source>
</reference>
<reference key="2">
    <citation type="journal article" date="2004" name="Genome Biol.">
        <title>Complete genome sequence of the industrial bacterium Bacillus licheniformis and comparisons with closely related Bacillus species.</title>
        <authorList>
            <person name="Rey M.W."/>
            <person name="Ramaiya P."/>
            <person name="Nelson B.A."/>
            <person name="Brody-Karpin S.D."/>
            <person name="Zaretsky E.J."/>
            <person name="Tang M."/>
            <person name="Lopez de Leon A."/>
            <person name="Xiang H."/>
            <person name="Gusti V."/>
            <person name="Clausen I.G."/>
            <person name="Olsen P.B."/>
            <person name="Rasmussen M.D."/>
            <person name="Andersen J.T."/>
            <person name="Joergensen P.L."/>
            <person name="Larsen T.S."/>
            <person name="Sorokin A."/>
            <person name="Bolotin A."/>
            <person name="Lapidus A."/>
            <person name="Galleron N."/>
            <person name="Ehrlich S.D."/>
            <person name="Berka R.M."/>
        </authorList>
    </citation>
    <scope>NUCLEOTIDE SEQUENCE [LARGE SCALE GENOMIC DNA]</scope>
    <source>
        <strain>ATCC 14580 / DSM 13 / JCM 2505 / CCUG 7422 / NBRC 12200 / NCIMB 9375 / NCTC 10341 / NRRL NRS-1264 / Gibson 46</strain>
    </source>
</reference>
<name>Y854_BACLD</name>
<dbReference type="EMBL" id="AE017333">
    <property type="protein sequence ID" value="AAU39788.1"/>
    <property type="molecule type" value="Genomic_DNA"/>
</dbReference>
<dbReference type="EMBL" id="CP000002">
    <property type="protein sequence ID" value="AAU22439.2"/>
    <property type="molecule type" value="Genomic_DNA"/>
</dbReference>
<dbReference type="SMR" id="Q65MC6"/>
<dbReference type="DNASU" id="3029706"/>
<dbReference type="KEGG" id="bld:BLi00854"/>
<dbReference type="KEGG" id="bli:BL03049"/>
<dbReference type="eggNOG" id="COG1742">
    <property type="taxonomic scope" value="Bacteria"/>
</dbReference>
<dbReference type="HOGENOM" id="CLU_117653_0_1_9"/>
<dbReference type="Proteomes" id="UP000000606">
    <property type="component" value="Chromosome"/>
</dbReference>
<dbReference type="GO" id="GO:0005886">
    <property type="term" value="C:plasma membrane"/>
    <property type="evidence" value="ECO:0007669"/>
    <property type="project" value="UniProtKB-SubCell"/>
</dbReference>
<dbReference type="Gene3D" id="1.10.3730.20">
    <property type="match status" value="1"/>
</dbReference>
<dbReference type="HAMAP" id="MF_00010">
    <property type="entry name" value="UPF0060"/>
    <property type="match status" value="1"/>
</dbReference>
<dbReference type="InterPro" id="IPR003844">
    <property type="entry name" value="UPF0060"/>
</dbReference>
<dbReference type="NCBIfam" id="NF002586">
    <property type="entry name" value="PRK02237.1"/>
    <property type="match status" value="1"/>
</dbReference>
<dbReference type="PANTHER" id="PTHR36116">
    <property type="entry name" value="UPF0060 MEMBRANE PROTEIN YNFA"/>
    <property type="match status" value="1"/>
</dbReference>
<dbReference type="PANTHER" id="PTHR36116:SF1">
    <property type="entry name" value="UPF0060 MEMBRANE PROTEIN YNFA"/>
    <property type="match status" value="1"/>
</dbReference>
<dbReference type="Pfam" id="PF02694">
    <property type="entry name" value="UPF0060"/>
    <property type="match status" value="1"/>
</dbReference>
<dbReference type="SUPFAM" id="SSF103481">
    <property type="entry name" value="Multidrug resistance efflux transporter EmrE"/>
    <property type="match status" value="1"/>
</dbReference>